<dbReference type="EC" id="5.6.2.1" evidence="1"/>
<dbReference type="EMBL" id="BX571857">
    <property type="protein sequence ID" value="CAG43956.1"/>
    <property type="molecule type" value="Genomic_DNA"/>
</dbReference>
<dbReference type="RefSeq" id="WP_000838479.1">
    <property type="nucleotide sequence ID" value="NC_002953.3"/>
</dbReference>
<dbReference type="SMR" id="Q6G767"/>
<dbReference type="KEGG" id="sas:SAS2145"/>
<dbReference type="HOGENOM" id="CLU_002929_5_2_9"/>
<dbReference type="GO" id="GO:0043597">
    <property type="term" value="C:cytoplasmic replication fork"/>
    <property type="evidence" value="ECO:0007669"/>
    <property type="project" value="TreeGrafter"/>
</dbReference>
<dbReference type="GO" id="GO:0003677">
    <property type="term" value="F:DNA binding"/>
    <property type="evidence" value="ECO:0007669"/>
    <property type="project" value="UniProtKB-KW"/>
</dbReference>
<dbReference type="GO" id="GO:0003917">
    <property type="term" value="F:DNA topoisomerase type I (single strand cut, ATP-independent) activity"/>
    <property type="evidence" value="ECO:0007669"/>
    <property type="project" value="UniProtKB-UniRule"/>
</dbReference>
<dbReference type="GO" id="GO:0000287">
    <property type="term" value="F:magnesium ion binding"/>
    <property type="evidence" value="ECO:0007669"/>
    <property type="project" value="UniProtKB-UniRule"/>
</dbReference>
<dbReference type="GO" id="GO:0006310">
    <property type="term" value="P:DNA recombination"/>
    <property type="evidence" value="ECO:0007669"/>
    <property type="project" value="TreeGrafter"/>
</dbReference>
<dbReference type="GO" id="GO:0006281">
    <property type="term" value="P:DNA repair"/>
    <property type="evidence" value="ECO:0007669"/>
    <property type="project" value="TreeGrafter"/>
</dbReference>
<dbReference type="GO" id="GO:0006265">
    <property type="term" value="P:DNA topological change"/>
    <property type="evidence" value="ECO:0007669"/>
    <property type="project" value="UniProtKB-UniRule"/>
</dbReference>
<dbReference type="CDD" id="cd00186">
    <property type="entry name" value="TOP1Ac"/>
    <property type="match status" value="1"/>
</dbReference>
<dbReference type="CDD" id="cd03362">
    <property type="entry name" value="TOPRIM_TopoIA_TopoIII"/>
    <property type="match status" value="1"/>
</dbReference>
<dbReference type="Gene3D" id="3.40.50.140">
    <property type="match status" value="1"/>
</dbReference>
<dbReference type="Gene3D" id="1.10.460.10">
    <property type="entry name" value="Topoisomerase I, domain 2"/>
    <property type="match status" value="1"/>
</dbReference>
<dbReference type="Gene3D" id="2.70.20.10">
    <property type="entry name" value="Topoisomerase I, domain 3"/>
    <property type="match status" value="1"/>
</dbReference>
<dbReference type="Gene3D" id="1.10.290.10">
    <property type="entry name" value="Topoisomerase I, domain 4"/>
    <property type="match status" value="1"/>
</dbReference>
<dbReference type="HAMAP" id="MF_00953">
    <property type="entry name" value="Topoisom_3_prok"/>
    <property type="match status" value="1"/>
</dbReference>
<dbReference type="InterPro" id="IPR000380">
    <property type="entry name" value="Topo_IA"/>
</dbReference>
<dbReference type="InterPro" id="IPR003601">
    <property type="entry name" value="Topo_IA_2"/>
</dbReference>
<dbReference type="InterPro" id="IPR023406">
    <property type="entry name" value="Topo_IA_AS"/>
</dbReference>
<dbReference type="InterPro" id="IPR013497">
    <property type="entry name" value="Topo_IA_cen"/>
</dbReference>
<dbReference type="InterPro" id="IPR013824">
    <property type="entry name" value="Topo_IA_cen_sub1"/>
</dbReference>
<dbReference type="InterPro" id="IPR013825">
    <property type="entry name" value="Topo_IA_cen_sub2"/>
</dbReference>
<dbReference type="InterPro" id="IPR013826">
    <property type="entry name" value="Topo_IA_cen_sub3"/>
</dbReference>
<dbReference type="InterPro" id="IPR023405">
    <property type="entry name" value="Topo_IA_core_domain"/>
</dbReference>
<dbReference type="InterPro" id="IPR003602">
    <property type="entry name" value="Topo_IA_DNA-bd_dom"/>
</dbReference>
<dbReference type="InterPro" id="IPR005738">
    <property type="entry name" value="TopoIII"/>
</dbReference>
<dbReference type="InterPro" id="IPR006171">
    <property type="entry name" value="TOPRIM_dom"/>
</dbReference>
<dbReference type="InterPro" id="IPR034144">
    <property type="entry name" value="TOPRIM_TopoIII"/>
</dbReference>
<dbReference type="NCBIfam" id="NF005829">
    <property type="entry name" value="PRK07726.1"/>
    <property type="match status" value="1"/>
</dbReference>
<dbReference type="NCBIfam" id="TIGR01056">
    <property type="entry name" value="topB"/>
    <property type="match status" value="1"/>
</dbReference>
<dbReference type="PANTHER" id="PTHR11390:SF21">
    <property type="entry name" value="DNA TOPOISOMERASE 3-ALPHA"/>
    <property type="match status" value="1"/>
</dbReference>
<dbReference type="PANTHER" id="PTHR11390">
    <property type="entry name" value="PROKARYOTIC DNA TOPOISOMERASE"/>
    <property type="match status" value="1"/>
</dbReference>
<dbReference type="Pfam" id="PF01131">
    <property type="entry name" value="Topoisom_bac"/>
    <property type="match status" value="1"/>
</dbReference>
<dbReference type="Pfam" id="PF01751">
    <property type="entry name" value="Toprim"/>
    <property type="match status" value="1"/>
</dbReference>
<dbReference type="PRINTS" id="PR00417">
    <property type="entry name" value="PRTPISMRASEI"/>
</dbReference>
<dbReference type="SMART" id="SM00437">
    <property type="entry name" value="TOP1Ac"/>
    <property type="match status" value="1"/>
</dbReference>
<dbReference type="SMART" id="SM00436">
    <property type="entry name" value="TOP1Bc"/>
    <property type="match status" value="1"/>
</dbReference>
<dbReference type="SMART" id="SM00493">
    <property type="entry name" value="TOPRIM"/>
    <property type="match status" value="1"/>
</dbReference>
<dbReference type="SUPFAM" id="SSF56712">
    <property type="entry name" value="Prokaryotic type I DNA topoisomerase"/>
    <property type="match status" value="1"/>
</dbReference>
<dbReference type="PROSITE" id="PS00396">
    <property type="entry name" value="TOPO_IA_1"/>
    <property type="match status" value="1"/>
</dbReference>
<dbReference type="PROSITE" id="PS52039">
    <property type="entry name" value="TOPO_IA_2"/>
    <property type="match status" value="1"/>
</dbReference>
<dbReference type="PROSITE" id="PS50880">
    <property type="entry name" value="TOPRIM"/>
    <property type="match status" value="1"/>
</dbReference>
<keyword id="KW-0238">DNA-binding</keyword>
<keyword id="KW-0413">Isomerase</keyword>
<keyword id="KW-0460">Magnesium</keyword>
<keyword id="KW-0479">Metal-binding</keyword>
<keyword id="KW-0799">Topoisomerase</keyword>
<gene>
    <name evidence="1" type="primary">topB</name>
    <name type="ordered locus">SAS2145</name>
</gene>
<name>TOP3_STAAS</name>
<reference key="1">
    <citation type="journal article" date="2004" name="Proc. Natl. Acad. Sci. U.S.A.">
        <title>Complete genomes of two clinical Staphylococcus aureus strains: evidence for the rapid evolution of virulence and drug resistance.</title>
        <authorList>
            <person name="Holden M.T.G."/>
            <person name="Feil E.J."/>
            <person name="Lindsay J.A."/>
            <person name="Peacock S.J."/>
            <person name="Day N.P.J."/>
            <person name="Enright M.C."/>
            <person name="Foster T.J."/>
            <person name="Moore C.E."/>
            <person name="Hurst L."/>
            <person name="Atkin R."/>
            <person name="Barron A."/>
            <person name="Bason N."/>
            <person name="Bentley S.D."/>
            <person name="Chillingworth C."/>
            <person name="Chillingworth T."/>
            <person name="Churcher C."/>
            <person name="Clark L."/>
            <person name="Corton C."/>
            <person name="Cronin A."/>
            <person name="Doggett J."/>
            <person name="Dowd L."/>
            <person name="Feltwell T."/>
            <person name="Hance Z."/>
            <person name="Harris B."/>
            <person name="Hauser H."/>
            <person name="Holroyd S."/>
            <person name="Jagels K."/>
            <person name="James K.D."/>
            <person name="Lennard N."/>
            <person name="Line A."/>
            <person name="Mayes R."/>
            <person name="Moule S."/>
            <person name="Mungall K."/>
            <person name="Ormond D."/>
            <person name="Quail M.A."/>
            <person name="Rabbinowitsch E."/>
            <person name="Rutherford K.M."/>
            <person name="Sanders M."/>
            <person name="Sharp S."/>
            <person name="Simmonds M."/>
            <person name="Stevens K."/>
            <person name="Whitehead S."/>
            <person name="Barrell B.G."/>
            <person name="Spratt B.G."/>
            <person name="Parkhill J."/>
        </authorList>
    </citation>
    <scope>NUCLEOTIDE SEQUENCE [LARGE SCALE GENOMIC DNA]</scope>
    <source>
        <strain>MSSA476</strain>
    </source>
</reference>
<accession>Q6G767</accession>
<comment type="function">
    <text evidence="1">Releases the supercoiling and torsional tension of DNA, which is introduced during the DNA replication and transcription, by transiently cleaving and rejoining one strand of the DNA duplex. Introduces a single-strand break via transesterification at a target site in duplex DNA. The scissile phosphodiester is attacked by the catalytic tyrosine of the enzyme, resulting in the formation of a DNA-(5'-phosphotyrosyl)-enzyme intermediate and the expulsion of a 3'-OH DNA strand. The free DNA strand then undergoes passage around the unbroken strand, thus removing DNA supercoils. Finally, in the religation step, the DNA 3'-OH attacks the covalent intermediate to expel the active-site tyrosine and restore the DNA phosphodiester backbone.</text>
</comment>
<comment type="catalytic activity">
    <reaction evidence="1">
        <text>ATP-independent breakage of single-stranded DNA, followed by passage and rejoining.</text>
        <dbReference type="EC" id="5.6.2.1"/>
    </reaction>
</comment>
<comment type="cofactor">
    <cofactor evidence="1">
        <name>Mg(2+)</name>
        <dbReference type="ChEBI" id="CHEBI:18420"/>
    </cofactor>
</comment>
<comment type="similarity">
    <text evidence="1 2">Belongs to the type IA topoisomerase family.</text>
</comment>
<organism>
    <name type="scientific">Staphylococcus aureus (strain MSSA476)</name>
    <dbReference type="NCBI Taxonomy" id="282459"/>
    <lineage>
        <taxon>Bacteria</taxon>
        <taxon>Bacillati</taxon>
        <taxon>Bacillota</taxon>
        <taxon>Bacilli</taxon>
        <taxon>Bacillales</taxon>
        <taxon>Staphylococcaceae</taxon>
        <taxon>Staphylococcus</taxon>
    </lineage>
</organism>
<sequence length="711" mass="81524">MKSLILAEKPSVARDIADALQINQKRNGYFENNQYIVTWALGHLVTNATPEQYDKNLKEWRLEDLPIIPKYMKTVVIGKTSKQFKTVKALILDNKVKDIIIATDAGREGELVARLILDKVGNKKPIRRLWISSVTKKAIQQGFKNLKDGRQYNDLYYAALARSEADWIVGINATRALTTKYDAQLSLGRVQTPTIQLVNTRQQEINQFKPQQYFTLSLTVKGFDFQLESNQRYTNKETLEQMVNNLKNVDGKIKSVATKHKKSYPQSLYNLTDLQQDMYRRYKIGPKETLNTLQSLYERHKVVTYPRTDSNYLTTDMVDTMKERIQATMATTYKDQARPLMSKTFSSKMSIFNNQKVSDHHAIIPTEVRPVMSDLSNRELKLYDMIVERFLEALMPPHEYDAITVTLEVAGHTFVLKENVTTVLGFKSIRQGESITEMQQPFSEGDEVKISKTNIREHETTPPEYFNEGSLLKAMENPQNFIQLKDKKYAQTLKQTGGIGTVATRADIIDKLFNMNAIESRDGKIKVTSKGKQILELAPEELTSPLLTAQWEEKLLLIERGKYQAKTFINEMKDFTKDVVNGIKNSDRKYKHDNLTTTECPTCGKFMIKVKTKNGQMLVCQDPSCKTKKNVQRKTNARCPNCKKKLTLFGKGKEAVYRCVCGHSETQAHMDQRMKSKSSGKVSRKEMKKYMNKNEGLDNNPFKDALKNLNL</sequence>
<evidence type="ECO:0000255" key="1">
    <source>
        <dbReference type="HAMAP-Rule" id="MF_00953"/>
    </source>
</evidence>
<evidence type="ECO:0000255" key="2">
    <source>
        <dbReference type="PROSITE-ProRule" id="PRU01383"/>
    </source>
</evidence>
<evidence type="ECO:0000256" key="3">
    <source>
        <dbReference type="SAM" id="MobiDB-lite"/>
    </source>
</evidence>
<feature type="chain" id="PRO_0000286374" description="DNA topoisomerase 3">
    <location>
        <begin position="1"/>
        <end position="711"/>
    </location>
</feature>
<feature type="domain" description="Toprim" evidence="1">
    <location>
        <begin position="2"/>
        <end position="135"/>
    </location>
</feature>
<feature type="domain" description="Topo IA-type catalytic" evidence="2">
    <location>
        <begin position="152"/>
        <end position="580"/>
    </location>
</feature>
<feature type="region of interest" description="Interaction with DNA" evidence="1">
    <location>
        <begin position="186"/>
        <end position="191"/>
    </location>
</feature>
<feature type="region of interest" description="Disordered" evidence="3">
    <location>
        <begin position="691"/>
        <end position="711"/>
    </location>
</feature>
<feature type="active site" description="O-(5'-phospho-DNA)-tyrosine intermediate" evidence="2">
    <location>
        <position position="305"/>
    </location>
</feature>
<feature type="binding site" evidence="1">
    <location>
        <position position="8"/>
    </location>
    <ligand>
        <name>Mg(2+)</name>
        <dbReference type="ChEBI" id="CHEBI:18420"/>
        <note>catalytic</note>
    </ligand>
</feature>
<feature type="binding site" evidence="1">
    <location>
        <position position="104"/>
    </location>
    <ligand>
        <name>Mg(2+)</name>
        <dbReference type="ChEBI" id="CHEBI:18420"/>
        <note>catalytic</note>
    </ligand>
</feature>
<feature type="site" description="Interaction with DNA" evidence="1">
    <location>
        <position position="60"/>
    </location>
</feature>
<feature type="site" description="Interaction with DNA" evidence="1">
    <location>
        <position position="167"/>
    </location>
</feature>
<feature type="site" description="Interaction with DNA" evidence="1">
    <location>
        <position position="175"/>
    </location>
</feature>
<feature type="site" description="Interaction with DNA" evidence="1">
    <location>
        <position position="307"/>
    </location>
</feature>
<protein>
    <recommendedName>
        <fullName evidence="1">DNA topoisomerase 3</fullName>
        <ecNumber evidence="1">5.6.2.1</ecNumber>
    </recommendedName>
    <alternativeName>
        <fullName evidence="1">DNA topoisomerase III</fullName>
    </alternativeName>
</protein>
<proteinExistence type="inferred from homology"/>